<keyword id="KW-1185">Reference proteome</keyword>
<comment type="similarity">
    <text evidence="3">To M.leprae ML1624.</text>
</comment>
<evidence type="ECO:0000255" key="1">
    <source>
        <dbReference type="PROSITE-ProRule" id="PRU00541"/>
    </source>
</evidence>
<evidence type="ECO:0000256" key="2">
    <source>
        <dbReference type="SAM" id="MobiDB-lite"/>
    </source>
</evidence>
<evidence type="ECO:0000305" key="3"/>
<protein>
    <recommendedName>
        <fullName>Uncharacterized protein MT2985</fullName>
    </recommendedName>
</protein>
<dbReference type="EMBL" id="AE000516">
    <property type="protein sequence ID" value="AAK47311.1"/>
    <property type="molecule type" value="Genomic_DNA"/>
</dbReference>
<dbReference type="PIR" id="E70747">
    <property type="entry name" value="E70747"/>
</dbReference>
<dbReference type="KEGG" id="mtc:MT2985"/>
<dbReference type="HOGENOM" id="CLU_020861_2_0_11"/>
<dbReference type="Proteomes" id="UP000001020">
    <property type="component" value="Chromosome"/>
</dbReference>
<dbReference type="GO" id="GO:0005829">
    <property type="term" value="C:cytosol"/>
    <property type="evidence" value="ECO:0007669"/>
    <property type="project" value="TreeGrafter"/>
</dbReference>
<dbReference type="GO" id="GO:0005524">
    <property type="term" value="F:ATP binding"/>
    <property type="evidence" value="ECO:0007669"/>
    <property type="project" value="InterPro"/>
</dbReference>
<dbReference type="GO" id="GO:0003677">
    <property type="term" value="F:DNA binding"/>
    <property type="evidence" value="ECO:0007669"/>
    <property type="project" value="InterPro"/>
</dbReference>
<dbReference type="GO" id="GO:0016787">
    <property type="term" value="F:hydrolase activity"/>
    <property type="evidence" value="ECO:0007669"/>
    <property type="project" value="InterPro"/>
</dbReference>
<dbReference type="CDD" id="cd18785">
    <property type="entry name" value="SF2_C"/>
    <property type="match status" value="1"/>
</dbReference>
<dbReference type="FunFam" id="3.40.50.300:FF:003134">
    <property type="entry name" value="Hypothetical alanine and arginine rich protein"/>
    <property type="match status" value="1"/>
</dbReference>
<dbReference type="Gene3D" id="3.40.50.300">
    <property type="entry name" value="P-loop containing nucleotide triphosphate hydrolases"/>
    <property type="match status" value="2"/>
</dbReference>
<dbReference type="InterPro" id="IPR006935">
    <property type="entry name" value="Helicase/UvrB_N"/>
</dbReference>
<dbReference type="InterPro" id="IPR014001">
    <property type="entry name" value="Helicase_ATP-bd"/>
</dbReference>
<dbReference type="InterPro" id="IPR050742">
    <property type="entry name" value="Helicase_Restrict-Modif_Enz"/>
</dbReference>
<dbReference type="InterPro" id="IPR027417">
    <property type="entry name" value="P-loop_NTPase"/>
</dbReference>
<dbReference type="PANTHER" id="PTHR47396:SF2">
    <property type="entry name" value="HELICASE ATP-BINDING DOMAIN-CONTAINING PROTEIN"/>
    <property type="match status" value="1"/>
</dbReference>
<dbReference type="PANTHER" id="PTHR47396">
    <property type="entry name" value="TYPE I RESTRICTION ENZYME ECOKI R PROTEIN"/>
    <property type="match status" value="1"/>
</dbReference>
<dbReference type="Pfam" id="PF04851">
    <property type="entry name" value="ResIII"/>
    <property type="match status" value="1"/>
</dbReference>
<dbReference type="SMART" id="SM00487">
    <property type="entry name" value="DEXDc"/>
    <property type="match status" value="1"/>
</dbReference>
<dbReference type="SUPFAM" id="SSF52540">
    <property type="entry name" value="P-loop containing nucleoside triphosphate hydrolases"/>
    <property type="match status" value="2"/>
</dbReference>
<dbReference type="PROSITE" id="PS51192">
    <property type="entry name" value="HELICASE_ATP_BIND_1"/>
    <property type="match status" value="1"/>
</dbReference>
<proteinExistence type="predicted"/>
<feature type="chain" id="PRO_0000427555" description="Uncharacterized protein MT2985">
    <location>
        <begin position="1"/>
        <end position="602"/>
    </location>
</feature>
<feature type="domain" description="Helicase ATP-binding" evidence="1">
    <location>
        <begin position="51"/>
        <end position="210"/>
    </location>
</feature>
<feature type="region of interest" description="Disordered" evidence="2">
    <location>
        <begin position="430"/>
        <end position="452"/>
    </location>
</feature>
<feature type="region of interest" description="Disordered" evidence="2">
    <location>
        <begin position="518"/>
        <end position="538"/>
    </location>
</feature>
<feature type="compositionally biased region" description="Basic and acidic residues" evidence="2">
    <location>
        <begin position="430"/>
        <end position="439"/>
    </location>
</feature>
<feature type="compositionally biased region" description="Polar residues" evidence="2">
    <location>
        <begin position="523"/>
        <end position="534"/>
    </location>
</feature>
<gene>
    <name type="ordered locus">MT2985</name>
</gene>
<sequence length="602" mass="65752">MLHFTAATSRFRLGRERANSVRSDGGWGVLQPVSATFNPPLRGWQRRALVQYLGTQPRDFLAVATPGSGKTSFALRIAAELLRYHTVEQVTVVVPTEHLKVQWAHAAAAHGLSLDPKFANSNPQTSPEYHGVMVTYAQVASHPTLHRVRTEARKTLVVFDEIHHGGDAKTWGDAIREAFGDATRRLALTGTPFRSDDSPIPFVSYQPDADGVLRSQADHTYGYAEALADGVVRPVVFLAYSGQARWRDSAGEEYEARLGEPLSAEQTARAWRTALDPEGEWMPAVITAADRRLRQLRAHVPDAGGMIIASDRTTARAYARLLTTMTAEEPTVVLSDDPGSSARITEFAQGTGRWLVAVRMVSEGVDVPRLSVGVYATNASTPLFFAQAIGRFVRSRRPGETASIFVPSVPNLLQLASALEVQRNHVLGRPHRESAHDPLDGDPATRTQTERGGAERGFTALGADAELDQVIFDGSSFGTATPTGSDEEADYLGIPGLLDAEQMRALLHRRQDEQLRKRAQLQKGATQPATSGASASVHGQLRDLRRELHTLVSIAHHRTGKPHGWIHDELRRRCGGPPIAAATRAQIKARIDALRQLNSERS</sequence>
<name>Y2917_MYCTO</name>
<reference key="1">
    <citation type="journal article" date="2002" name="J. Bacteriol.">
        <title>Whole-genome comparison of Mycobacterium tuberculosis clinical and laboratory strains.</title>
        <authorList>
            <person name="Fleischmann R.D."/>
            <person name="Alland D."/>
            <person name="Eisen J.A."/>
            <person name="Carpenter L."/>
            <person name="White O."/>
            <person name="Peterson J.D."/>
            <person name="DeBoy R.T."/>
            <person name="Dodson R.J."/>
            <person name="Gwinn M.L."/>
            <person name="Haft D.H."/>
            <person name="Hickey E.K."/>
            <person name="Kolonay J.F."/>
            <person name="Nelson W.C."/>
            <person name="Umayam L.A."/>
            <person name="Ermolaeva M.D."/>
            <person name="Salzberg S.L."/>
            <person name="Delcher A."/>
            <person name="Utterback T.R."/>
            <person name="Weidman J.F."/>
            <person name="Khouri H.M."/>
            <person name="Gill J."/>
            <person name="Mikula A."/>
            <person name="Bishai W."/>
            <person name="Jacobs W.R. Jr."/>
            <person name="Venter J.C."/>
            <person name="Fraser C.M."/>
        </authorList>
    </citation>
    <scope>NUCLEOTIDE SEQUENCE [LARGE SCALE GENOMIC DNA]</scope>
    <source>
        <strain>CDC 1551 / Oshkosh</strain>
    </source>
</reference>
<organism>
    <name type="scientific">Mycobacterium tuberculosis (strain CDC 1551 / Oshkosh)</name>
    <dbReference type="NCBI Taxonomy" id="83331"/>
    <lineage>
        <taxon>Bacteria</taxon>
        <taxon>Bacillati</taxon>
        <taxon>Actinomycetota</taxon>
        <taxon>Actinomycetes</taxon>
        <taxon>Mycobacteriales</taxon>
        <taxon>Mycobacteriaceae</taxon>
        <taxon>Mycobacterium</taxon>
        <taxon>Mycobacterium tuberculosis complex</taxon>
    </lineage>
</organism>
<accession>P9WL20</accession>
<accession>L0TCM0</accession>
<accession>Q10966</accession>
<accession>Q10967</accession>